<reference key="1">
    <citation type="journal article" date="2006" name="J. Bacteriol.">
        <title>The genome sequence of the obligately chemolithoautotrophic, facultatively anaerobic bacterium Thiobacillus denitrificans.</title>
        <authorList>
            <person name="Beller H.R."/>
            <person name="Chain P.S."/>
            <person name="Letain T.E."/>
            <person name="Chakicherla A."/>
            <person name="Larimer F.W."/>
            <person name="Richardson P.M."/>
            <person name="Coleman M.A."/>
            <person name="Wood A.P."/>
            <person name="Kelly D.P."/>
        </authorList>
    </citation>
    <scope>NUCLEOTIDE SEQUENCE [LARGE SCALE GENOMIC DNA]</scope>
    <source>
        <strain>ATCC 25259 / T1</strain>
    </source>
</reference>
<accession>Q3SH50</accession>
<dbReference type="EC" id="3.1.26.3" evidence="1"/>
<dbReference type="EMBL" id="CP000116">
    <property type="protein sequence ID" value="AAZ98039.1"/>
    <property type="molecule type" value="Genomic_DNA"/>
</dbReference>
<dbReference type="RefSeq" id="WP_011312598.1">
    <property type="nucleotide sequence ID" value="NC_007404.1"/>
</dbReference>
<dbReference type="SMR" id="Q3SH50"/>
<dbReference type="STRING" id="292415.Tbd_2086"/>
<dbReference type="KEGG" id="tbd:Tbd_2086"/>
<dbReference type="eggNOG" id="COG0571">
    <property type="taxonomic scope" value="Bacteria"/>
</dbReference>
<dbReference type="HOGENOM" id="CLU_000907_1_1_4"/>
<dbReference type="OrthoDB" id="9805026at2"/>
<dbReference type="Proteomes" id="UP000008291">
    <property type="component" value="Chromosome"/>
</dbReference>
<dbReference type="GO" id="GO:0005737">
    <property type="term" value="C:cytoplasm"/>
    <property type="evidence" value="ECO:0007669"/>
    <property type="project" value="UniProtKB-SubCell"/>
</dbReference>
<dbReference type="GO" id="GO:0003725">
    <property type="term" value="F:double-stranded RNA binding"/>
    <property type="evidence" value="ECO:0007669"/>
    <property type="project" value="TreeGrafter"/>
</dbReference>
<dbReference type="GO" id="GO:0046872">
    <property type="term" value="F:metal ion binding"/>
    <property type="evidence" value="ECO:0007669"/>
    <property type="project" value="UniProtKB-KW"/>
</dbReference>
<dbReference type="GO" id="GO:0004525">
    <property type="term" value="F:ribonuclease III activity"/>
    <property type="evidence" value="ECO:0007669"/>
    <property type="project" value="UniProtKB-UniRule"/>
</dbReference>
<dbReference type="GO" id="GO:0019843">
    <property type="term" value="F:rRNA binding"/>
    <property type="evidence" value="ECO:0007669"/>
    <property type="project" value="UniProtKB-KW"/>
</dbReference>
<dbReference type="GO" id="GO:0006397">
    <property type="term" value="P:mRNA processing"/>
    <property type="evidence" value="ECO:0007669"/>
    <property type="project" value="UniProtKB-UniRule"/>
</dbReference>
<dbReference type="GO" id="GO:0010468">
    <property type="term" value="P:regulation of gene expression"/>
    <property type="evidence" value="ECO:0007669"/>
    <property type="project" value="TreeGrafter"/>
</dbReference>
<dbReference type="GO" id="GO:0006364">
    <property type="term" value="P:rRNA processing"/>
    <property type="evidence" value="ECO:0007669"/>
    <property type="project" value="UniProtKB-UniRule"/>
</dbReference>
<dbReference type="GO" id="GO:0008033">
    <property type="term" value="P:tRNA processing"/>
    <property type="evidence" value="ECO:0007669"/>
    <property type="project" value="UniProtKB-KW"/>
</dbReference>
<dbReference type="CDD" id="cd10845">
    <property type="entry name" value="DSRM_RNAse_III_family"/>
    <property type="match status" value="1"/>
</dbReference>
<dbReference type="CDD" id="cd00593">
    <property type="entry name" value="RIBOc"/>
    <property type="match status" value="1"/>
</dbReference>
<dbReference type="FunFam" id="1.10.1520.10:FF:000001">
    <property type="entry name" value="Ribonuclease 3"/>
    <property type="match status" value="1"/>
</dbReference>
<dbReference type="FunFam" id="3.30.160.20:FF:000003">
    <property type="entry name" value="Ribonuclease 3"/>
    <property type="match status" value="1"/>
</dbReference>
<dbReference type="Gene3D" id="3.30.160.20">
    <property type="match status" value="1"/>
</dbReference>
<dbReference type="Gene3D" id="1.10.1520.10">
    <property type="entry name" value="Ribonuclease III domain"/>
    <property type="match status" value="1"/>
</dbReference>
<dbReference type="HAMAP" id="MF_00104">
    <property type="entry name" value="RNase_III"/>
    <property type="match status" value="1"/>
</dbReference>
<dbReference type="InterPro" id="IPR014720">
    <property type="entry name" value="dsRBD_dom"/>
</dbReference>
<dbReference type="InterPro" id="IPR011907">
    <property type="entry name" value="RNase_III"/>
</dbReference>
<dbReference type="InterPro" id="IPR000999">
    <property type="entry name" value="RNase_III_dom"/>
</dbReference>
<dbReference type="InterPro" id="IPR036389">
    <property type="entry name" value="RNase_III_sf"/>
</dbReference>
<dbReference type="NCBIfam" id="TIGR02191">
    <property type="entry name" value="RNaseIII"/>
    <property type="match status" value="1"/>
</dbReference>
<dbReference type="PANTHER" id="PTHR11207:SF0">
    <property type="entry name" value="RIBONUCLEASE 3"/>
    <property type="match status" value="1"/>
</dbReference>
<dbReference type="PANTHER" id="PTHR11207">
    <property type="entry name" value="RIBONUCLEASE III"/>
    <property type="match status" value="1"/>
</dbReference>
<dbReference type="Pfam" id="PF00035">
    <property type="entry name" value="dsrm"/>
    <property type="match status" value="1"/>
</dbReference>
<dbReference type="Pfam" id="PF14622">
    <property type="entry name" value="Ribonucleas_3_3"/>
    <property type="match status" value="1"/>
</dbReference>
<dbReference type="SMART" id="SM00358">
    <property type="entry name" value="DSRM"/>
    <property type="match status" value="1"/>
</dbReference>
<dbReference type="SMART" id="SM00535">
    <property type="entry name" value="RIBOc"/>
    <property type="match status" value="1"/>
</dbReference>
<dbReference type="SUPFAM" id="SSF54768">
    <property type="entry name" value="dsRNA-binding domain-like"/>
    <property type="match status" value="1"/>
</dbReference>
<dbReference type="SUPFAM" id="SSF69065">
    <property type="entry name" value="RNase III domain-like"/>
    <property type="match status" value="1"/>
</dbReference>
<dbReference type="PROSITE" id="PS50137">
    <property type="entry name" value="DS_RBD"/>
    <property type="match status" value="1"/>
</dbReference>
<dbReference type="PROSITE" id="PS00517">
    <property type="entry name" value="RNASE_3_1"/>
    <property type="match status" value="1"/>
</dbReference>
<dbReference type="PROSITE" id="PS50142">
    <property type="entry name" value="RNASE_3_2"/>
    <property type="match status" value="1"/>
</dbReference>
<proteinExistence type="inferred from homology"/>
<gene>
    <name evidence="1" type="primary">rnc</name>
    <name type="ordered locus">Tbd_2086</name>
</gene>
<organism>
    <name type="scientific">Thiobacillus denitrificans (strain ATCC 25259 / T1)</name>
    <dbReference type="NCBI Taxonomy" id="292415"/>
    <lineage>
        <taxon>Bacteria</taxon>
        <taxon>Pseudomonadati</taxon>
        <taxon>Pseudomonadota</taxon>
        <taxon>Betaproteobacteria</taxon>
        <taxon>Nitrosomonadales</taxon>
        <taxon>Thiobacillaceae</taxon>
        <taxon>Thiobacillus</taxon>
    </lineage>
</organism>
<comment type="function">
    <text evidence="1">Digests double-stranded RNA. Involved in the processing of primary rRNA transcript to yield the immediate precursors to the large and small rRNAs (23S and 16S). Processes some mRNAs, and tRNAs when they are encoded in the rRNA operon. Processes pre-crRNA and tracrRNA of type II CRISPR loci if present in the organism.</text>
</comment>
<comment type="catalytic activity">
    <reaction evidence="1">
        <text>Endonucleolytic cleavage to 5'-phosphomonoester.</text>
        <dbReference type="EC" id="3.1.26.3"/>
    </reaction>
</comment>
<comment type="cofactor">
    <cofactor evidence="1">
        <name>Mg(2+)</name>
        <dbReference type="ChEBI" id="CHEBI:18420"/>
    </cofactor>
</comment>
<comment type="subunit">
    <text evidence="1">Homodimer.</text>
</comment>
<comment type="subcellular location">
    <subcellularLocation>
        <location evidence="1">Cytoplasm</location>
    </subcellularLocation>
</comment>
<comment type="similarity">
    <text evidence="1">Belongs to the ribonuclease III family.</text>
</comment>
<protein>
    <recommendedName>
        <fullName evidence="1">Ribonuclease 3</fullName>
        <ecNumber evidence="1">3.1.26.3</ecNumber>
    </recommendedName>
    <alternativeName>
        <fullName evidence="1">Ribonuclease III</fullName>
        <shortName evidence="1">RNase III</shortName>
    </alternativeName>
</protein>
<keyword id="KW-0963">Cytoplasm</keyword>
<keyword id="KW-0255">Endonuclease</keyword>
<keyword id="KW-0378">Hydrolase</keyword>
<keyword id="KW-0460">Magnesium</keyword>
<keyword id="KW-0479">Metal-binding</keyword>
<keyword id="KW-0507">mRNA processing</keyword>
<keyword id="KW-0540">Nuclease</keyword>
<keyword id="KW-1185">Reference proteome</keyword>
<keyword id="KW-0694">RNA-binding</keyword>
<keyword id="KW-0698">rRNA processing</keyword>
<keyword id="KW-0699">rRNA-binding</keyword>
<keyword id="KW-0819">tRNA processing</keyword>
<feature type="chain" id="PRO_0000228597" description="Ribonuclease 3">
    <location>
        <begin position="1"/>
        <end position="226"/>
    </location>
</feature>
<feature type="domain" description="RNase III" evidence="1">
    <location>
        <begin position="7"/>
        <end position="129"/>
    </location>
</feature>
<feature type="domain" description="DRBM" evidence="1">
    <location>
        <begin position="156"/>
        <end position="226"/>
    </location>
</feature>
<feature type="active site" evidence="1">
    <location>
        <position position="46"/>
    </location>
</feature>
<feature type="active site" evidence="1">
    <location>
        <position position="118"/>
    </location>
</feature>
<feature type="binding site" evidence="1">
    <location>
        <position position="42"/>
    </location>
    <ligand>
        <name>Mg(2+)</name>
        <dbReference type="ChEBI" id="CHEBI:18420"/>
    </ligand>
</feature>
<feature type="binding site" evidence="1">
    <location>
        <position position="115"/>
    </location>
    <ligand>
        <name>Mg(2+)</name>
        <dbReference type="ChEBI" id="CHEBI:18420"/>
    </ligand>
</feature>
<feature type="binding site" evidence="1">
    <location>
        <position position="118"/>
    </location>
    <ligand>
        <name>Mg(2+)</name>
        <dbReference type="ChEBI" id="CHEBI:18420"/>
    </ligand>
</feature>
<name>RNC_THIDA</name>
<evidence type="ECO:0000255" key="1">
    <source>
        <dbReference type="HAMAP-Rule" id="MF_00104"/>
    </source>
</evidence>
<sequence>MNNALLDARLQQALGYTFSRSGLLQQALTHRSYGALNNERLEFLGDSVLNCSVARALYDAFPDLPEGSLSRLRANLVRQETLAEIAGALRLGDSLRLGEGELKSGGFRRPSILADALESLFGAVFLDAGFDEAQRVVRRLFDPLVAQIDPKASGKDPKTRLQEILQSRRLPLPEYRLVGTEGEAHDQSFIVECLLAKPVLSTRGTGKSRRAAEQEAARQACAELQR</sequence>